<organism>
    <name type="scientific">Acidianus two-tailed virus</name>
    <name type="common">ATV</name>
    <dbReference type="NCBI Taxonomy" id="315953"/>
    <lineage>
        <taxon>Viruses</taxon>
        <taxon>Viruses incertae sedis</taxon>
        <taxon>Bicaudaviridae</taxon>
        <taxon>Bicaudavirus</taxon>
    </lineage>
</organism>
<sequence length="117" mass="13078">MGVWSVVLYLLNTLIVPFRDERAKFEIERVSAEEAKKIIQMHNSQFVSAIGHSASANALSLLLGVAVPVNRTEVFFNVGDEAIAMALKKRLAEGQVLRTVQELEAVGFDLYYIKRVQ</sequence>
<protein>
    <recommendedName>
        <fullName>Uncharacterized protein ORF117</fullName>
    </recommendedName>
</protein>
<keyword id="KW-1185">Reference proteome</keyword>
<dbReference type="EMBL" id="AJ888457">
    <property type="protein sequence ID" value="CAI59882.1"/>
    <property type="molecule type" value="Genomic_DNA"/>
</dbReference>
<dbReference type="RefSeq" id="YP_319837.1">
    <property type="nucleotide sequence ID" value="NC_007409.1"/>
</dbReference>
<dbReference type="SMR" id="Q3V4T2"/>
<dbReference type="GeneID" id="4484284"/>
<dbReference type="KEGG" id="vg:4484284"/>
<dbReference type="OrthoDB" id="18199at10239"/>
<dbReference type="Proteomes" id="UP000002150">
    <property type="component" value="Genome"/>
</dbReference>
<dbReference type="Gene3D" id="3.40.50.11170">
    <property type="entry name" value="Uncharacterised protein PF08960, DUF1874"/>
    <property type="match status" value="1"/>
</dbReference>
<dbReference type="InterPro" id="IPR015055">
    <property type="entry name" value="STIV_B116-like"/>
</dbReference>
<dbReference type="InterPro" id="IPR037236">
    <property type="entry name" value="STIV_B116-like_sf"/>
</dbReference>
<dbReference type="Pfam" id="PF08960">
    <property type="entry name" value="STIV_B116-like"/>
    <property type="match status" value="1"/>
</dbReference>
<dbReference type="SUPFAM" id="SSF143602">
    <property type="entry name" value="STIV B116-like"/>
    <property type="match status" value="1"/>
</dbReference>
<organismHost>
    <name type="scientific">Acidianus convivator</name>
    <dbReference type="NCBI Taxonomy" id="269667"/>
</organismHost>
<proteinExistence type="predicted"/>
<name>Y117_ATV</name>
<feature type="chain" id="PRO_0000389038" description="Uncharacterized protein ORF117">
    <location>
        <begin position="1"/>
        <end position="117"/>
    </location>
</feature>
<reference key="1">
    <citation type="journal article" date="2005" name="Nature">
        <title>Virology: independent virus development outside a host.</title>
        <authorList>
            <person name="Haring M."/>
            <person name="Vestergaard G."/>
            <person name="Rachel R."/>
            <person name="Chen L."/>
            <person name="Garrett R.A."/>
            <person name="Prangishvili D."/>
        </authorList>
    </citation>
    <scope>NUCLEOTIDE SEQUENCE [GENOMIC DNA]</scope>
</reference>
<accession>Q3V4T2</accession>